<proteinExistence type="inferred from homology"/>
<gene>
    <name type="primary">sanA</name>
    <name type="ordered locus">SF2229</name>
    <name type="ordered locus">S2358</name>
</gene>
<dbReference type="EMBL" id="AE005674">
    <property type="protein sequence ID" value="AAN43751.2"/>
    <property type="molecule type" value="Genomic_DNA"/>
</dbReference>
<dbReference type="EMBL" id="AE014073">
    <property type="protein sequence ID" value="AAP17568.1"/>
    <property type="molecule type" value="Genomic_DNA"/>
</dbReference>
<dbReference type="RefSeq" id="NP_708044.2">
    <property type="nucleotide sequence ID" value="NC_004337.2"/>
</dbReference>
<dbReference type="RefSeq" id="WP_000920064.1">
    <property type="nucleotide sequence ID" value="NZ_WPGW01000017.1"/>
</dbReference>
<dbReference type="STRING" id="198214.SF2229"/>
<dbReference type="PaxDb" id="198214-SF2229"/>
<dbReference type="GeneID" id="1026730"/>
<dbReference type="GeneID" id="75206397"/>
<dbReference type="KEGG" id="sfl:SF2229"/>
<dbReference type="KEGG" id="sfx:S2358"/>
<dbReference type="PATRIC" id="fig|198214.7.peg.2670"/>
<dbReference type="HOGENOM" id="CLU_051474_0_2_6"/>
<dbReference type="Proteomes" id="UP000001006">
    <property type="component" value="Chromosome"/>
</dbReference>
<dbReference type="Proteomes" id="UP000002673">
    <property type="component" value="Chromosome"/>
</dbReference>
<dbReference type="GO" id="GO:0005886">
    <property type="term" value="C:plasma membrane"/>
    <property type="evidence" value="ECO:0007669"/>
    <property type="project" value="UniProtKB-SubCell"/>
</dbReference>
<dbReference type="CDD" id="cd06259">
    <property type="entry name" value="YdcF-like"/>
    <property type="match status" value="1"/>
</dbReference>
<dbReference type="InterPro" id="IPR051599">
    <property type="entry name" value="Cell_Envelope_Assoc"/>
</dbReference>
<dbReference type="InterPro" id="IPR003848">
    <property type="entry name" value="DUF218"/>
</dbReference>
<dbReference type="InterPro" id="IPR023604">
    <property type="entry name" value="Uncharacterised_SanA"/>
</dbReference>
<dbReference type="NCBIfam" id="NF008092">
    <property type="entry name" value="PRK10834.1"/>
    <property type="match status" value="1"/>
</dbReference>
<dbReference type="PANTHER" id="PTHR30336">
    <property type="entry name" value="INNER MEMBRANE PROTEIN, PROBABLE PERMEASE"/>
    <property type="match status" value="1"/>
</dbReference>
<dbReference type="PANTHER" id="PTHR30336:SF0">
    <property type="entry name" value="PROTEIN SANA"/>
    <property type="match status" value="1"/>
</dbReference>
<dbReference type="Pfam" id="PF02698">
    <property type="entry name" value="DUF218"/>
    <property type="match status" value="1"/>
</dbReference>
<dbReference type="PIRSF" id="PIRSF005011">
    <property type="entry name" value="SanA"/>
    <property type="match status" value="1"/>
</dbReference>
<accession>P0AFY5</accession>
<accession>P33017</accession>
<accession>P76438</accession>
<sequence length="239" mass="27287">MLKRVFLSLLVLIGLLLLTVLGLDRWMSWKTAPYIYDELQDLPYRQVGVVLGTAKYYRTGVINQYYRYRIQGAINAYNSGKVNYLLLSGDNALQSYNEPMTMRKDLIAAGVDPSDIVLDYAGFRTLDSIVRTRKVFDTNDFIIITQRFHCERALFIALHMGIQAQCYAVPSPKDMLSVRIREFAARFGALADLYIFKREPRFLGPLVPIPAMHQVPEDAQGYPAVTPEQLLELQKKQGK</sequence>
<feature type="chain" id="PRO_0000097579" description="Protein SanA">
    <location>
        <begin position="1"/>
        <end position="239"/>
    </location>
</feature>
<feature type="topological domain" description="Cytoplasmic" evidence="2">
    <location>
        <begin position="1"/>
        <end position="6"/>
    </location>
</feature>
<feature type="transmembrane region" description="Helical" evidence="2">
    <location>
        <begin position="7"/>
        <end position="23"/>
    </location>
</feature>
<feature type="topological domain" description="Periplasmic" evidence="2">
    <location>
        <begin position="24"/>
        <end position="239"/>
    </location>
</feature>
<feature type="sequence conflict" description="In Ref. 2; AAP17568." evidence="3" ref="2">
    <original>A</original>
    <variation>T</variation>
    <location>
        <position position="189"/>
    </location>
</feature>
<protein>
    <recommendedName>
        <fullName>Protein SanA</fullName>
    </recommendedName>
</protein>
<comment type="function">
    <text evidence="1">Participates in the barrier function of the cell envelope.</text>
</comment>
<comment type="subcellular location">
    <subcellularLocation>
        <location evidence="1">Cell inner membrane</location>
        <topology evidence="1">Single-pass membrane protein</topology>
    </subcellularLocation>
</comment>
<reference key="1">
    <citation type="journal article" date="2002" name="Nucleic Acids Res.">
        <title>Genome sequence of Shigella flexneri 2a: insights into pathogenicity through comparison with genomes of Escherichia coli K12 and O157.</title>
        <authorList>
            <person name="Jin Q."/>
            <person name="Yuan Z."/>
            <person name="Xu J."/>
            <person name="Wang Y."/>
            <person name="Shen Y."/>
            <person name="Lu W."/>
            <person name="Wang J."/>
            <person name="Liu H."/>
            <person name="Yang J."/>
            <person name="Yang F."/>
            <person name="Zhang X."/>
            <person name="Zhang J."/>
            <person name="Yang G."/>
            <person name="Wu H."/>
            <person name="Qu D."/>
            <person name="Dong J."/>
            <person name="Sun L."/>
            <person name="Xue Y."/>
            <person name="Zhao A."/>
            <person name="Gao Y."/>
            <person name="Zhu J."/>
            <person name="Kan B."/>
            <person name="Ding K."/>
            <person name="Chen S."/>
            <person name="Cheng H."/>
            <person name="Yao Z."/>
            <person name="He B."/>
            <person name="Chen R."/>
            <person name="Ma D."/>
            <person name="Qiang B."/>
            <person name="Wen Y."/>
            <person name="Hou Y."/>
            <person name="Yu J."/>
        </authorList>
    </citation>
    <scope>NUCLEOTIDE SEQUENCE [LARGE SCALE GENOMIC DNA]</scope>
    <source>
        <strain>301 / Serotype 2a</strain>
    </source>
</reference>
<reference key="2">
    <citation type="journal article" date="2003" name="Infect. Immun.">
        <title>Complete genome sequence and comparative genomics of Shigella flexneri serotype 2a strain 2457T.</title>
        <authorList>
            <person name="Wei J."/>
            <person name="Goldberg M.B."/>
            <person name="Burland V."/>
            <person name="Venkatesan M.M."/>
            <person name="Deng W."/>
            <person name="Fournier G."/>
            <person name="Mayhew G.F."/>
            <person name="Plunkett G. III"/>
            <person name="Rose D.J."/>
            <person name="Darling A."/>
            <person name="Mau B."/>
            <person name="Perna N.T."/>
            <person name="Payne S.M."/>
            <person name="Runyen-Janecky L.J."/>
            <person name="Zhou S."/>
            <person name="Schwartz D.C."/>
            <person name="Blattner F.R."/>
        </authorList>
    </citation>
    <scope>NUCLEOTIDE SEQUENCE [LARGE SCALE GENOMIC DNA]</scope>
    <source>
        <strain>ATCC 700930 / 2457T / Serotype 2a</strain>
    </source>
</reference>
<keyword id="KW-0997">Cell inner membrane</keyword>
<keyword id="KW-1003">Cell membrane</keyword>
<keyword id="KW-0472">Membrane</keyword>
<keyword id="KW-1185">Reference proteome</keyword>
<keyword id="KW-0812">Transmembrane</keyword>
<keyword id="KW-1133">Transmembrane helix</keyword>
<evidence type="ECO:0000250" key="1"/>
<evidence type="ECO:0000255" key="2"/>
<evidence type="ECO:0000305" key="3"/>
<organism>
    <name type="scientific">Shigella flexneri</name>
    <dbReference type="NCBI Taxonomy" id="623"/>
    <lineage>
        <taxon>Bacteria</taxon>
        <taxon>Pseudomonadati</taxon>
        <taxon>Pseudomonadota</taxon>
        <taxon>Gammaproteobacteria</taxon>
        <taxon>Enterobacterales</taxon>
        <taxon>Enterobacteriaceae</taxon>
        <taxon>Shigella</taxon>
    </lineage>
</organism>
<name>SANA_SHIFL</name>